<sequence>ADSRNPLEEEFRETNYEEF</sequence>
<keyword id="KW-0044">Antibiotic</keyword>
<keyword id="KW-0929">Antimicrobial</keyword>
<keyword id="KW-0053">Apoptosis</keyword>
<keyword id="KW-0204">Cytolysis</keyword>
<keyword id="KW-0903">Direct protein sequencing</keyword>
<keyword id="KW-1015">Disulfide bond</keyword>
<keyword id="KW-0285">Flavoprotein</keyword>
<keyword id="KW-0288">FMN</keyword>
<keyword id="KW-0325">Glycoprotein</keyword>
<keyword id="KW-0354">Hemolysis</keyword>
<keyword id="KW-1200">Hemorrhagic toxin</keyword>
<keyword id="KW-1199">Hemostasis impairing toxin</keyword>
<keyword id="KW-0560">Oxidoreductase</keyword>
<keyword id="KW-0964">Secreted</keyword>
<keyword id="KW-0800">Toxin</keyword>
<comment type="function">
    <text evidence="2">Catalyzes an oxidative deamination of predominantly hydrophobic and aromatic L-amino acids, thus producing hydrogen peroxide that may contribute to the diverse toxic effects of this enzyme (PubMed:10441379). Is active on L-Ile followed by L-Phe, L-Met, L-Val, L-Arg, L-Leu (PubMed:10441379). Exhibits diverse biological activities, such as hemorrhage (minimum hemorrhagic dose of 10 ug), and apoptosis. May also induce hemolysis, edema, antibacterial and antiparasitic activities. May also regulate platelet aggregation. Effects of snake L-amino oxidases on platelets are controversial, since they either induce aggregation or inhibit agonist-induced aggregation. These different effects are probably due to different experimental conditions.</text>
</comment>
<comment type="catalytic activity">
    <reaction evidence="2">
        <text>an L-alpha-amino acid + O2 + H2O = a 2-oxocarboxylate + H2O2 + NH4(+)</text>
        <dbReference type="Rhea" id="RHEA:13781"/>
        <dbReference type="ChEBI" id="CHEBI:15377"/>
        <dbReference type="ChEBI" id="CHEBI:15379"/>
        <dbReference type="ChEBI" id="CHEBI:16240"/>
        <dbReference type="ChEBI" id="CHEBI:28938"/>
        <dbReference type="ChEBI" id="CHEBI:35179"/>
        <dbReference type="ChEBI" id="CHEBI:59869"/>
        <dbReference type="EC" id="1.4.3.2"/>
    </reaction>
</comment>
<comment type="catalytic activity">
    <reaction evidence="2">
        <text>L-leucine + O2 + H2O = 4-methyl-2-oxopentanoate + H2O2 + NH4(+)</text>
        <dbReference type="Rhea" id="RHEA:60996"/>
        <dbReference type="ChEBI" id="CHEBI:15377"/>
        <dbReference type="ChEBI" id="CHEBI:15379"/>
        <dbReference type="ChEBI" id="CHEBI:16240"/>
        <dbReference type="ChEBI" id="CHEBI:17865"/>
        <dbReference type="ChEBI" id="CHEBI:28938"/>
        <dbReference type="ChEBI" id="CHEBI:57427"/>
    </reaction>
</comment>
<comment type="catalytic activity">
    <reaction evidence="2">
        <text>L-phenylalanine + O2 + H2O = 3-phenylpyruvate + H2O2 + NH4(+)</text>
        <dbReference type="Rhea" id="RHEA:61240"/>
        <dbReference type="ChEBI" id="CHEBI:15377"/>
        <dbReference type="ChEBI" id="CHEBI:15379"/>
        <dbReference type="ChEBI" id="CHEBI:16240"/>
        <dbReference type="ChEBI" id="CHEBI:18005"/>
        <dbReference type="ChEBI" id="CHEBI:28938"/>
        <dbReference type="ChEBI" id="CHEBI:58095"/>
    </reaction>
</comment>
<comment type="catalytic activity">
    <reaction evidence="2">
        <text>L-methionine + O2 + H2O = 4-methylsulfanyl-2-oxobutanoate + H2O2 + NH4(+)</text>
        <dbReference type="Rhea" id="RHEA:61236"/>
        <dbReference type="ChEBI" id="CHEBI:15377"/>
        <dbReference type="ChEBI" id="CHEBI:15379"/>
        <dbReference type="ChEBI" id="CHEBI:16240"/>
        <dbReference type="ChEBI" id="CHEBI:16723"/>
        <dbReference type="ChEBI" id="CHEBI:28938"/>
        <dbReference type="ChEBI" id="CHEBI:57844"/>
    </reaction>
</comment>
<comment type="catalytic activity">
    <reaction evidence="2">
        <text>L-isoleucine + O2 + H2O = (S)-3-methyl-2-oxopentanoate + H2O2 + NH4(+)</text>
        <dbReference type="Rhea" id="RHEA:61232"/>
        <dbReference type="ChEBI" id="CHEBI:15377"/>
        <dbReference type="ChEBI" id="CHEBI:15379"/>
        <dbReference type="ChEBI" id="CHEBI:16240"/>
        <dbReference type="ChEBI" id="CHEBI:28938"/>
        <dbReference type="ChEBI" id="CHEBI:35146"/>
        <dbReference type="ChEBI" id="CHEBI:58045"/>
    </reaction>
</comment>
<comment type="catalytic activity">
    <reaction evidence="2">
        <text>L-arginine + O2 + H2O = 5-guanidino-2-oxopentanoate + H2O2 + NH4(+)</text>
        <dbReference type="Rhea" id="RHEA:51404"/>
        <dbReference type="ChEBI" id="CHEBI:15377"/>
        <dbReference type="ChEBI" id="CHEBI:15379"/>
        <dbReference type="ChEBI" id="CHEBI:16240"/>
        <dbReference type="ChEBI" id="CHEBI:28938"/>
        <dbReference type="ChEBI" id="CHEBI:32682"/>
        <dbReference type="ChEBI" id="CHEBI:58489"/>
    </reaction>
</comment>
<comment type="catalytic activity">
    <reaction evidence="2">
        <text>L-valine + O2 + H2O = 3-methyl-2-oxobutanoate + H2O2 + NH4(+)</text>
        <dbReference type="Rhea" id="RHEA:61252"/>
        <dbReference type="ChEBI" id="CHEBI:11851"/>
        <dbReference type="ChEBI" id="CHEBI:15377"/>
        <dbReference type="ChEBI" id="CHEBI:15379"/>
        <dbReference type="ChEBI" id="CHEBI:16240"/>
        <dbReference type="ChEBI" id="CHEBI:28938"/>
        <dbReference type="ChEBI" id="CHEBI:57762"/>
    </reaction>
</comment>
<comment type="cofactor">
    <cofactor evidence="2">
        <name>FMN</name>
        <dbReference type="ChEBI" id="CHEBI:58210"/>
    </cofactor>
    <text evidence="2">Does not use FAD as a cofactor.</text>
</comment>
<comment type="subunit">
    <text evidence="1">Homodimer; non-covalently linked.</text>
</comment>
<comment type="subcellular location">
    <subcellularLocation>
        <location evidence="2">Secreted</location>
    </subcellularLocation>
</comment>
<comment type="tissue specificity">
    <text evidence="5">Expressed by the venom gland.</text>
</comment>
<comment type="PTM">
    <text evidence="1">Contains 2 disulfide bonds.</text>
</comment>
<comment type="PTM">
    <text evidence="1">N-glycosylated.</text>
</comment>
<comment type="similarity">
    <text evidence="4">Belongs to the flavin monoamine oxidase family. FIG1 subfamily.</text>
</comment>
<organism>
    <name type="scientific">Agkistrodon contortrix laticinctus</name>
    <name type="common">Broad-banded copperhead</name>
    <name type="synonym">Agkistrodon mokasen laticinctus</name>
    <dbReference type="NCBI Taxonomy" id="2782196"/>
    <lineage>
        <taxon>Eukaryota</taxon>
        <taxon>Metazoa</taxon>
        <taxon>Chordata</taxon>
        <taxon>Craniata</taxon>
        <taxon>Vertebrata</taxon>
        <taxon>Euteleostomi</taxon>
        <taxon>Lepidosauria</taxon>
        <taxon>Squamata</taxon>
        <taxon>Bifurcata</taxon>
        <taxon>Unidentata</taxon>
        <taxon>Episquamata</taxon>
        <taxon>Toxicofera</taxon>
        <taxon>Serpentes</taxon>
        <taxon>Colubroidea</taxon>
        <taxon>Viperidae</taxon>
        <taxon>Crotalinae</taxon>
        <taxon>Agkistrodon</taxon>
    </lineage>
</organism>
<protein>
    <recommendedName>
        <fullName>L-amino-acid oxidase</fullName>
        <shortName evidence="3">ACL-LAO</shortName>
        <shortName>LAAO</shortName>
        <ecNumber evidence="2">1.4.3.2</ecNumber>
    </recommendedName>
</protein>
<proteinExistence type="evidence at protein level"/>
<accession>P0CC16</accession>
<dbReference type="EC" id="1.4.3.2" evidence="2"/>
<dbReference type="GO" id="GO:0005576">
    <property type="term" value="C:extracellular region"/>
    <property type="evidence" value="ECO:0000314"/>
    <property type="project" value="UniProtKB"/>
</dbReference>
<dbReference type="GO" id="GO:0010181">
    <property type="term" value="F:FMN binding"/>
    <property type="evidence" value="ECO:0000314"/>
    <property type="project" value="UniProtKB"/>
</dbReference>
<dbReference type="GO" id="GO:0001716">
    <property type="term" value="F:L-amino-acid oxidase activity"/>
    <property type="evidence" value="ECO:0000314"/>
    <property type="project" value="UniProtKB"/>
</dbReference>
<dbReference type="GO" id="GO:0106329">
    <property type="term" value="F:L-phenylalaine oxidase activity"/>
    <property type="evidence" value="ECO:0007669"/>
    <property type="project" value="RHEA"/>
</dbReference>
<dbReference type="GO" id="GO:0042803">
    <property type="term" value="F:protein homodimerization activity"/>
    <property type="evidence" value="ECO:0000314"/>
    <property type="project" value="UniProtKB"/>
</dbReference>
<dbReference type="GO" id="GO:0090729">
    <property type="term" value="F:toxin activity"/>
    <property type="evidence" value="ECO:0000314"/>
    <property type="project" value="UniProtKB"/>
</dbReference>
<dbReference type="GO" id="GO:0006915">
    <property type="term" value="P:apoptotic process"/>
    <property type="evidence" value="ECO:0007669"/>
    <property type="project" value="UniProtKB-KW"/>
</dbReference>
<dbReference type="GO" id="GO:0042742">
    <property type="term" value="P:defense response to bacterium"/>
    <property type="evidence" value="ECO:0007669"/>
    <property type="project" value="UniProtKB-KW"/>
</dbReference>
<dbReference type="GO" id="GO:0031640">
    <property type="term" value="P:killing of cells of another organism"/>
    <property type="evidence" value="ECO:0000314"/>
    <property type="project" value="UniProtKB"/>
</dbReference>
<dbReference type="GO" id="GO:0044358">
    <property type="term" value="P:venom-mediated hemorrhage in another organism"/>
    <property type="evidence" value="ECO:0000314"/>
    <property type="project" value="UniProtKB"/>
</dbReference>
<reference key="1">
    <citation type="journal article" date="1999" name="Arch. Biochem. Biophys.">
        <title>Isolation and structural characterization of a cytotoxic L-amino acid oxidase from Agkistrodon contortrix laticinctus snake venom: preliminary crystallographic data.</title>
        <authorList>
            <person name="Souza D.H.F."/>
            <person name="Eugenio L.M."/>
            <person name="Fletcher J.E."/>
            <person name="Jiang M.-S."/>
            <person name="Garratt R.C."/>
            <person name="Oliva G."/>
            <person name="Selistre-de-Araujo H.S."/>
        </authorList>
    </citation>
    <scope>PROTEIN SEQUENCE</scope>
    <scope>FUNCTION</scope>
    <scope>CATALYTIC ACTIVITY</scope>
    <scope>COFACTOR</scope>
    <scope>SUBCELLULAR LOCATION</scope>
    <scope>SUBSTRATE SPECIFICITY</scope>
    <source>
        <tissue>Venom</tissue>
    </source>
</reference>
<feature type="chain" id="PRO_0000390926" description="L-amino-acid oxidase">
    <location>
        <begin position="1"/>
        <end position="19" status="greater than"/>
    </location>
</feature>
<feature type="non-terminal residue" evidence="3">
    <location>
        <position position="19"/>
    </location>
</feature>
<evidence type="ECO:0000250" key="1">
    <source>
        <dbReference type="UniProtKB" id="P81382"/>
    </source>
</evidence>
<evidence type="ECO:0000269" key="2">
    <source>
    </source>
</evidence>
<evidence type="ECO:0000303" key="3">
    <source>
    </source>
</evidence>
<evidence type="ECO:0000305" key="4"/>
<evidence type="ECO:0000305" key="5">
    <source>
    </source>
</evidence>
<name>OXLA_AGKCL</name>